<reference key="1">
    <citation type="journal article" date="2007" name="J. Bacteriol.">
        <title>Genome sequence and analysis of the soil cellulolytic actinomycete Thermobifida fusca YX.</title>
        <authorList>
            <person name="Lykidis A."/>
            <person name="Mavromatis K."/>
            <person name="Ivanova N."/>
            <person name="Anderson I."/>
            <person name="Land M."/>
            <person name="DiBartolo G."/>
            <person name="Martinez M."/>
            <person name="Lapidus A."/>
            <person name="Lucas S."/>
            <person name="Copeland A."/>
            <person name="Richardson P."/>
            <person name="Wilson D.B."/>
            <person name="Kyrpides N."/>
        </authorList>
    </citation>
    <scope>NUCLEOTIDE SEQUENCE [LARGE SCALE GENOMIC DNA]</scope>
    <source>
        <strain>YX</strain>
    </source>
</reference>
<evidence type="ECO:0000255" key="1">
    <source>
        <dbReference type="HAMAP-Rule" id="MF_00253"/>
    </source>
</evidence>
<organism>
    <name type="scientific">Thermobifida fusca (strain YX)</name>
    <dbReference type="NCBI Taxonomy" id="269800"/>
    <lineage>
        <taxon>Bacteria</taxon>
        <taxon>Bacillati</taxon>
        <taxon>Actinomycetota</taxon>
        <taxon>Actinomycetes</taxon>
        <taxon>Streptosporangiales</taxon>
        <taxon>Nocardiopsidaceae</taxon>
        <taxon>Thermobifida</taxon>
    </lineage>
</organism>
<proteinExistence type="inferred from homology"/>
<name>SYG_THEFY</name>
<comment type="function">
    <text evidence="1">Catalyzes the attachment of glycine to tRNA(Gly).</text>
</comment>
<comment type="catalytic activity">
    <reaction evidence="1">
        <text>tRNA(Gly) + glycine + ATP = glycyl-tRNA(Gly) + AMP + diphosphate</text>
        <dbReference type="Rhea" id="RHEA:16013"/>
        <dbReference type="Rhea" id="RHEA-COMP:9664"/>
        <dbReference type="Rhea" id="RHEA-COMP:9683"/>
        <dbReference type="ChEBI" id="CHEBI:30616"/>
        <dbReference type="ChEBI" id="CHEBI:33019"/>
        <dbReference type="ChEBI" id="CHEBI:57305"/>
        <dbReference type="ChEBI" id="CHEBI:78442"/>
        <dbReference type="ChEBI" id="CHEBI:78522"/>
        <dbReference type="ChEBI" id="CHEBI:456215"/>
        <dbReference type="EC" id="6.1.1.14"/>
    </reaction>
</comment>
<comment type="subunit">
    <text evidence="1">Homodimer.</text>
</comment>
<comment type="subcellular location">
    <subcellularLocation>
        <location evidence="1">Cytoplasm</location>
    </subcellularLocation>
</comment>
<comment type="similarity">
    <text evidence="1">Belongs to the class-II aminoacyl-tRNA synthetase family.</text>
</comment>
<keyword id="KW-0030">Aminoacyl-tRNA synthetase</keyword>
<keyword id="KW-0067">ATP-binding</keyword>
<keyword id="KW-0963">Cytoplasm</keyword>
<keyword id="KW-0436">Ligase</keyword>
<keyword id="KW-0547">Nucleotide-binding</keyword>
<keyword id="KW-0648">Protein biosynthesis</keyword>
<feature type="chain" id="PRO_1000047389" description="Glycine--tRNA ligase">
    <location>
        <begin position="1"/>
        <end position="462"/>
    </location>
</feature>
<feature type="binding site" evidence="1">
    <location>
        <position position="101"/>
    </location>
    <ligand>
        <name>substrate</name>
    </ligand>
</feature>
<feature type="binding site" evidence="1">
    <location>
        <position position="164"/>
    </location>
    <ligand>
        <name>substrate</name>
    </ligand>
</feature>
<feature type="binding site" evidence="1">
    <location>
        <begin position="196"/>
        <end position="198"/>
    </location>
    <ligand>
        <name>ATP</name>
        <dbReference type="ChEBI" id="CHEBI:30616"/>
    </ligand>
</feature>
<feature type="binding site" evidence="1">
    <location>
        <begin position="206"/>
        <end position="211"/>
    </location>
    <ligand>
        <name>ATP</name>
        <dbReference type="ChEBI" id="CHEBI:30616"/>
    </ligand>
</feature>
<feature type="binding site" evidence="1">
    <location>
        <begin position="211"/>
        <end position="215"/>
    </location>
    <ligand>
        <name>substrate</name>
    </ligand>
</feature>
<feature type="binding site" evidence="1">
    <location>
        <begin position="283"/>
        <end position="284"/>
    </location>
    <ligand>
        <name>ATP</name>
        <dbReference type="ChEBI" id="CHEBI:30616"/>
    </ligand>
</feature>
<feature type="binding site" evidence="1">
    <location>
        <begin position="323"/>
        <end position="327"/>
    </location>
    <ligand>
        <name>substrate</name>
    </ligand>
</feature>
<feature type="binding site" evidence="1">
    <location>
        <begin position="327"/>
        <end position="330"/>
    </location>
    <ligand>
        <name>ATP</name>
        <dbReference type="ChEBI" id="CHEBI:30616"/>
    </ligand>
</feature>
<sequence>MAAKSEAMDTLVSLAKRRGLVYPSSEIYGGLRASWDYGPLGVELKNNVKRQWWRAMVQEREDIVGLDSCVILAREVWEASGHVDAFVDPLTECQSCHKRFRADHLTEAYEAKHGKPPANGLADLNCPHCGAKGAFTEPRMFSGLLRTYVGPVQDESGLAFLRPETAQGIFINYKNVEQSSRRKIPFGIAQIGKSFRNEITPGNFIFRTREFEQMEVEFFVRPGTDEEWHQYWIDTRLQWYIDLGINKDNLRLYEHPKEKLSHYSKRTVDIEYRFNFAGSEWGELEGIANRTDYDLSTHSKRSGTDLSYFDQETNTRFIPYVIEPSAGVDRTMLTFLLDAYTEDEAPNAKGKMEKRVVMRLDPRLAPVKAAVLPLSRNADLSPKARDLAAKLRKRWNVEFDDAGAIGRRYRRQDEIGTPFCVTIDFDTLEDNAVTVRERDSMAQERISIDQVEQYLAERLAGC</sequence>
<protein>
    <recommendedName>
        <fullName evidence="1">Glycine--tRNA ligase</fullName>
        <ecNumber evidence="1">6.1.1.14</ecNumber>
    </recommendedName>
    <alternativeName>
        <fullName evidence="1">Glycyl-tRNA synthetase</fullName>
        <shortName evidence="1">GlyRS</shortName>
    </alternativeName>
</protein>
<gene>
    <name evidence="1" type="primary">glyQS</name>
    <name type="ordered locus">Tfu_0861</name>
</gene>
<dbReference type="EC" id="6.1.1.14" evidence="1"/>
<dbReference type="EMBL" id="CP000088">
    <property type="protein sequence ID" value="AAZ54899.1"/>
    <property type="molecule type" value="Genomic_DNA"/>
</dbReference>
<dbReference type="SMR" id="Q47RL8"/>
<dbReference type="STRING" id="269800.Tfu_0861"/>
<dbReference type="KEGG" id="tfu:Tfu_0861"/>
<dbReference type="eggNOG" id="COG0423">
    <property type="taxonomic scope" value="Bacteria"/>
</dbReference>
<dbReference type="HOGENOM" id="CLU_015515_2_1_11"/>
<dbReference type="GO" id="GO:0005737">
    <property type="term" value="C:cytoplasm"/>
    <property type="evidence" value="ECO:0007669"/>
    <property type="project" value="UniProtKB-SubCell"/>
</dbReference>
<dbReference type="GO" id="GO:0005524">
    <property type="term" value="F:ATP binding"/>
    <property type="evidence" value="ECO:0007669"/>
    <property type="project" value="UniProtKB-UniRule"/>
</dbReference>
<dbReference type="GO" id="GO:0004820">
    <property type="term" value="F:glycine-tRNA ligase activity"/>
    <property type="evidence" value="ECO:0000250"/>
    <property type="project" value="UniProtKB"/>
</dbReference>
<dbReference type="GO" id="GO:0046983">
    <property type="term" value="F:protein dimerization activity"/>
    <property type="evidence" value="ECO:0000250"/>
    <property type="project" value="UniProtKB"/>
</dbReference>
<dbReference type="GO" id="GO:0006426">
    <property type="term" value="P:glycyl-tRNA aminoacylation"/>
    <property type="evidence" value="ECO:0007669"/>
    <property type="project" value="UniProtKB-UniRule"/>
</dbReference>
<dbReference type="CDD" id="cd00774">
    <property type="entry name" value="GlyRS-like_core"/>
    <property type="match status" value="1"/>
</dbReference>
<dbReference type="CDD" id="cd00858">
    <property type="entry name" value="GlyRS_anticodon"/>
    <property type="match status" value="1"/>
</dbReference>
<dbReference type="FunFam" id="3.40.50.800:FF:000002">
    <property type="entry name" value="Glycine--tRNA ligase"/>
    <property type="match status" value="1"/>
</dbReference>
<dbReference type="Gene3D" id="3.40.50.800">
    <property type="entry name" value="Anticodon-binding domain"/>
    <property type="match status" value="1"/>
</dbReference>
<dbReference type="Gene3D" id="3.30.930.10">
    <property type="entry name" value="Bira Bifunctional Protein, Domain 2"/>
    <property type="match status" value="1"/>
</dbReference>
<dbReference type="HAMAP" id="MF_00253_B">
    <property type="entry name" value="Gly_tRNA_synth_B"/>
    <property type="match status" value="1"/>
</dbReference>
<dbReference type="InterPro" id="IPR002314">
    <property type="entry name" value="aa-tRNA-synt_IIb"/>
</dbReference>
<dbReference type="InterPro" id="IPR006195">
    <property type="entry name" value="aa-tRNA-synth_II"/>
</dbReference>
<dbReference type="InterPro" id="IPR045864">
    <property type="entry name" value="aa-tRNA-synth_II/BPL/LPL"/>
</dbReference>
<dbReference type="InterPro" id="IPR004154">
    <property type="entry name" value="Anticodon-bd"/>
</dbReference>
<dbReference type="InterPro" id="IPR036621">
    <property type="entry name" value="Anticodon-bd_dom_sf"/>
</dbReference>
<dbReference type="InterPro" id="IPR027031">
    <property type="entry name" value="Gly-tRNA_synthase/POLG2"/>
</dbReference>
<dbReference type="InterPro" id="IPR022961">
    <property type="entry name" value="Gly_tRNA_ligase_bac"/>
</dbReference>
<dbReference type="InterPro" id="IPR033731">
    <property type="entry name" value="GlyRS-like_core"/>
</dbReference>
<dbReference type="InterPro" id="IPR002315">
    <property type="entry name" value="tRNA-synt_gly"/>
</dbReference>
<dbReference type="NCBIfam" id="TIGR00389">
    <property type="entry name" value="glyS_dimeric"/>
    <property type="match status" value="1"/>
</dbReference>
<dbReference type="NCBIfam" id="NF003211">
    <property type="entry name" value="PRK04173.1"/>
    <property type="match status" value="1"/>
</dbReference>
<dbReference type="PANTHER" id="PTHR10745:SF8">
    <property type="entry name" value="DNA POLYMERASE SUBUNIT GAMMA-2, MITOCHONDRIAL"/>
    <property type="match status" value="1"/>
</dbReference>
<dbReference type="PANTHER" id="PTHR10745">
    <property type="entry name" value="GLYCYL-TRNA SYNTHETASE/DNA POLYMERASE SUBUNIT GAMMA-2"/>
    <property type="match status" value="1"/>
</dbReference>
<dbReference type="Pfam" id="PF03129">
    <property type="entry name" value="HGTP_anticodon"/>
    <property type="match status" value="1"/>
</dbReference>
<dbReference type="Pfam" id="PF00587">
    <property type="entry name" value="tRNA-synt_2b"/>
    <property type="match status" value="1"/>
</dbReference>
<dbReference type="PRINTS" id="PR01043">
    <property type="entry name" value="TRNASYNTHGLY"/>
</dbReference>
<dbReference type="SUPFAM" id="SSF52954">
    <property type="entry name" value="Class II aaRS ABD-related"/>
    <property type="match status" value="1"/>
</dbReference>
<dbReference type="SUPFAM" id="SSF55681">
    <property type="entry name" value="Class II aaRS and biotin synthetases"/>
    <property type="match status" value="1"/>
</dbReference>
<dbReference type="PROSITE" id="PS50862">
    <property type="entry name" value="AA_TRNA_LIGASE_II"/>
    <property type="match status" value="1"/>
</dbReference>
<accession>Q47RL8</accession>